<feature type="signal peptide" evidence="2">
    <location>
        <begin position="1"/>
        <end position="21"/>
    </location>
</feature>
<feature type="chain" id="PRO_0000393683" description="Probable exopolygalacturonase C">
    <location>
        <begin position="22"/>
        <end position="440"/>
    </location>
</feature>
<feature type="repeat" description="PbH1 1">
    <location>
        <begin position="188"/>
        <end position="210"/>
    </location>
</feature>
<feature type="repeat" description="PbH1 2">
    <location>
        <begin position="217"/>
        <end position="238"/>
    </location>
</feature>
<feature type="repeat" description="PbH1 3">
    <location>
        <begin position="240"/>
        <end position="261"/>
    </location>
</feature>
<feature type="repeat" description="PbH1 4">
    <location>
        <begin position="272"/>
        <end position="293"/>
    </location>
</feature>
<feature type="active site" description="Proton donor" evidence="1">
    <location>
        <position position="231"/>
    </location>
</feature>
<feature type="active site" evidence="1">
    <location>
        <position position="255"/>
    </location>
</feature>
<feature type="glycosylation site" description="N-linked (GlcNAc...) asparagine" evidence="2">
    <location>
        <position position="84"/>
    </location>
</feature>
<feature type="glycosylation site" description="N-linked (GlcNAc...) asparagine" evidence="2">
    <location>
        <position position="151"/>
    </location>
</feature>
<feature type="glycosylation site" description="N-linked (GlcNAc...) asparagine" evidence="2">
    <location>
        <position position="219"/>
    </location>
</feature>
<feature type="glycosylation site" description="N-linked (GlcNAc...) asparagine" evidence="2">
    <location>
        <position position="271"/>
    </location>
</feature>
<feature type="glycosylation site" description="N-linked (GlcNAc...) asparagine" evidence="2">
    <location>
        <position position="313"/>
    </location>
</feature>
<feature type="glycosylation site" description="N-linked (GlcNAc...) asparagine" evidence="2">
    <location>
        <position position="434"/>
    </location>
</feature>
<feature type="disulfide bond" evidence="1">
    <location>
        <begin position="389"/>
        <end position="395"/>
    </location>
</feature>
<organism>
    <name type="scientific">Aspergillus fumigatus (strain CBS 144.89 / FGSC A1163 / CEA10)</name>
    <name type="common">Neosartorya fumigata</name>
    <dbReference type="NCBI Taxonomy" id="451804"/>
    <lineage>
        <taxon>Eukaryota</taxon>
        <taxon>Fungi</taxon>
        <taxon>Dikarya</taxon>
        <taxon>Ascomycota</taxon>
        <taxon>Pezizomycotina</taxon>
        <taxon>Eurotiomycetes</taxon>
        <taxon>Eurotiomycetidae</taxon>
        <taxon>Eurotiales</taxon>
        <taxon>Aspergillaceae</taxon>
        <taxon>Aspergillus</taxon>
        <taxon>Aspergillus subgen. Fumigati</taxon>
    </lineage>
</organism>
<dbReference type="EC" id="3.2.1.67"/>
<dbReference type="EMBL" id="DS499596">
    <property type="protein sequence ID" value="EDP52870.1"/>
    <property type="molecule type" value="Genomic_DNA"/>
</dbReference>
<dbReference type="SMR" id="B0XYC4"/>
<dbReference type="GlyCosmos" id="B0XYC4">
    <property type="glycosylation" value="6 sites, No reported glycans"/>
</dbReference>
<dbReference type="EnsemblFungi" id="EDP52870">
    <property type="protein sequence ID" value="EDP52870"/>
    <property type="gene ID" value="AFUB_040410"/>
</dbReference>
<dbReference type="VEuPathDB" id="FungiDB:AFUB_040410"/>
<dbReference type="HOGENOM" id="CLU_016031_1_2_1"/>
<dbReference type="OrthoDB" id="46829at5052"/>
<dbReference type="PhylomeDB" id="B0XYC4"/>
<dbReference type="Proteomes" id="UP000001699">
    <property type="component" value="Unassembled WGS sequence"/>
</dbReference>
<dbReference type="GO" id="GO:0005576">
    <property type="term" value="C:extracellular region"/>
    <property type="evidence" value="ECO:0000250"/>
    <property type="project" value="UniProtKB"/>
</dbReference>
<dbReference type="GO" id="GO:0047911">
    <property type="term" value="F:galacturan 1,4-alpha-galacturonidase activity"/>
    <property type="evidence" value="ECO:0007669"/>
    <property type="project" value="UniProtKB-EC"/>
</dbReference>
<dbReference type="GO" id="GO:0004650">
    <property type="term" value="F:polygalacturonase activity"/>
    <property type="evidence" value="ECO:0000250"/>
    <property type="project" value="UniProtKB"/>
</dbReference>
<dbReference type="GO" id="GO:0071555">
    <property type="term" value="P:cell wall organization"/>
    <property type="evidence" value="ECO:0007669"/>
    <property type="project" value="UniProtKB-KW"/>
</dbReference>
<dbReference type="GO" id="GO:0045490">
    <property type="term" value="P:pectin catabolic process"/>
    <property type="evidence" value="ECO:0000250"/>
    <property type="project" value="UniProtKB"/>
</dbReference>
<dbReference type="FunFam" id="2.160.20.10:FF:000037">
    <property type="entry name" value="Probable exopolygalacturonase C"/>
    <property type="match status" value="1"/>
</dbReference>
<dbReference type="Gene3D" id="2.160.20.10">
    <property type="entry name" value="Single-stranded right-handed beta-helix, Pectin lyase-like"/>
    <property type="match status" value="1"/>
</dbReference>
<dbReference type="InterPro" id="IPR000743">
    <property type="entry name" value="Glyco_hydro_28"/>
</dbReference>
<dbReference type="InterPro" id="IPR012334">
    <property type="entry name" value="Pectin_lyas_fold"/>
</dbReference>
<dbReference type="InterPro" id="IPR011050">
    <property type="entry name" value="Pectin_lyase_fold/virulence"/>
</dbReference>
<dbReference type="PANTHER" id="PTHR31736">
    <property type="match status" value="1"/>
</dbReference>
<dbReference type="PANTHER" id="PTHR31736:SF11">
    <property type="entry name" value="EXOPOLYGALACTURONASE C-RELATED"/>
    <property type="match status" value="1"/>
</dbReference>
<dbReference type="Pfam" id="PF00295">
    <property type="entry name" value="Glyco_hydro_28"/>
    <property type="match status" value="1"/>
</dbReference>
<dbReference type="SUPFAM" id="SSF51126">
    <property type="entry name" value="Pectin lyase-like"/>
    <property type="match status" value="1"/>
</dbReference>
<reference key="1">
    <citation type="journal article" date="2008" name="PLoS Genet.">
        <title>Genomic islands in the pathogenic filamentous fungus Aspergillus fumigatus.</title>
        <authorList>
            <person name="Fedorova N.D."/>
            <person name="Khaldi N."/>
            <person name="Joardar V.S."/>
            <person name="Maiti R."/>
            <person name="Amedeo P."/>
            <person name="Anderson M.J."/>
            <person name="Crabtree J."/>
            <person name="Silva J.C."/>
            <person name="Badger J.H."/>
            <person name="Albarraq A."/>
            <person name="Angiuoli S."/>
            <person name="Bussey H."/>
            <person name="Bowyer P."/>
            <person name="Cotty P.J."/>
            <person name="Dyer P.S."/>
            <person name="Egan A."/>
            <person name="Galens K."/>
            <person name="Fraser-Liggett C.M."/>
            <person name="Haas B.J."/>
            <person name="Inman J.M."/>
            <person name="Kent R."/>
            <person name="Lemieux S."/>
            <person name="Malavazi I."/>
            <person name="Orvis J."/>
            <person name="Roemer T."/>
            <person name="Ronning C.M."/>
            <person name="Sundaram J.P."/>
            <person name="Sutton G."/>
            <person name="Turner G."/>
            <person name="Venter J.C."/>
            <person name="White O.R."/>
            <person name="Whitty B.R."/>
            <person name="Youngman P."/>
            <person name="Wolfe K.H."/>
            <person name="Goldman G.H."/>
            <person name="Wortman J.R."/>
            <person name="Jiang B."/>
            <person name="Denning D.W."/>
            <person name="Nierman W.C."/>
        </authorList>
    </citation>
    <scope>NUCLEOTIDE SEQUENCE [LARGE SCALE GENOMIC DNA]</scope>
    <source>
        <strain>CBS 144.89 / FGSC A1163 / CEA10</strain>
    </source>
</reference>
<gene>
    <name type="primary">pgxC</name>
    <name type="ORF">AFUB_040410</name>
</gene>
<name>PGXC_ASPFC</name>
<accession>B0XYC4</accession>
<comment type="function">
    <text evidence="1">Specific in hydrolyzing the terminal glycosidic bond of polygalacturonic acid and oligogalacturonates.</text>
</comment>
<comment type="catalytic activity">
    <reaction>
        <text>[(1-&gt;4)-alpha-D-galacturonosyl](n) + H2O = alpha-D-galacturonate + [(1-&gt;4)-alpha-D-galacturonosyl](n-1)</text>
        <dbReference type="Rhea" id="RHEA:14117"/>
        <dbReference type="Rhea" id="RHEA-COMP:14570"/>
        <dbReference type="Rhea" id="RHEA-COMP:14572"/>
        <dbReference type="ChEBI" id="CHEBI:15377"/>
        <dbReference type="ChEBI" id="CHEBI:58658"/>
        <dbReference type="ChEBI" id="CHEBI:140523"/>
        <dbReference type="EC" id="3.2.1.67"/>
    </reaction>
</comment>
<comment type="subcellular location">
    <subcellularLocation>
        <location evidence="1">Secreted</location>
    </subcellularLocation>
</comment>
<comment type="similarity">
    <text evidence="3">Belongs to the glycosyl hydrolase 28 family.</text>
</comment>
<keyword id="KW-0961">Cell wall biogenesis/degradation</keyword>
<keyword id="KW-1015">Disulfide bond</keyword>
<keyword id="KW-0325">Glycoprotein</keyword>
<keyword id="KW-0326">Glycosidase</keyword>
<keyword id="KW-0378">Hydrolase</keyword>
<keyword id="KW-0677">Repeat</keyword>
<keyword id="KW-0964">Secreted</keyword>
<keyword id="KW-0732">Signal</keyword>
<sequence>MLITNPALLGILASLVPLALGAPNQPIQARSRKCVIPSSYASSHGTADDSPAVASAFAQCAENSVIVFQEGVDYNIFHPIKATNLSNVEIRVLGNLHLPQDITAVQNIVKSGQSTWFTFQGPRVDWTGADDIKNGWINSYGQAWWDANPANSSSFPNRPHLMSYKTSQASIKNFRSRKPIAWNVKLQGDDITVSHAIVDATSTGGFPFNTDGFDVEGTNISITDSVMFNGDDAIAVNTPSHNIVFARNTIGYQSHGMSIGSLGKDPTDFANITNLRFEDVTVIDALYAARFKSWSGGRGLVKNVVWKNIRTFNVTFPIFVTQSYSDQSASRPGTIDPFSSVMMEDFTWSDFSGTINTYHPGDGSCVTDPCWYNVGLPNLKHTEAIVLECNTESSCKNFRTEGIRLHPQSKDSPSVICMKATAELNPKLGFECKNGTFVPH</sequence>
<proteinExistence type="inferred from homology"/>
<evidence type="ECO:0000250" key="1"/>
<evidence type="ECO:0000255" key="2"/>
<evidence type="ECO:0000305" key="3"/>
<protein>
    <recommendedName>
        <fullName>Probable exopolygalacturonase C</fullName>
        <ecNumber>3.2.1.67</ecNumber>
    </recommendedName>
    <alternativeName>
        <fullName>Galacturan 1,4-alpha-galacturonidase C</fullName>
    </alternativeName>
    <alternativeName>
        <fullName>Poly(1,4-alpha-D-galacturonide)galacturonohydrolase C</fullName>
    </alternativeName>
</protein>